<feature type="chain" id="PRO_0000426986" description="Phosphopantetheine adenylyltransferase">
    <location>
        <begin position="1"/>
        <end position="161"/>
    </location>
</feature>
<feature type="binding site" evidence="1">
    <location>
        <begin position="9"/>
        <end position="10"/>
    </location>
    <ligand>
        <name>ATP</name>
        <dbReference type="ChEBI" id="CHEBI:30616"/>
    </ligand>
</feature>
<feature type="binding site" evidence="1">
    <location>
        <position position="9"/>
    </location>
    <ligand>
        <name>substrate</name>
    </ligand>
</feature>
<feature type="binding site" evidence="1">
    <location>
        <position position="17"/>
    </location>
    <ligand>
        <name>ATP</name>
        <dbReference type="ChEBI" id="CHEBI:30616"/>
    </ligand>
</feature>
<feature type="binding site" evidence="1">
    <location>
        <position position="41"/>
    </location>
    <ligand>
        <name>substrate</name>
    </ligand>
</feature>
<feature type="binding site" evidence="1">
    <location>
        <position position="73"/>
    </location>
    <ligand>
        <name>substrate</name>
    </ligand>
</feature>
<feature type="binding site" evidence="1">
    <location>
        <position position="87"/>
    </location>
    <ligand>
        <name>substrate</name>
    </ligand>
</feature>
<feature type="binding site" evidence="1">
    <location>
        <begin position="88"/>
        <end position="90"/>
    </location>
    <ligand>
        <name>ATP</name>
        <dbReference type="ChEBI" id="CHEBI:30616"/>
    </ligand>
</feature>
<feature type="binding site" evidence="1">
    <location>
        <position position="98"/>
    </location>
    <ligand>
        <name>ATP</name>
        <dbReference type="ChEBI" id="CHEBI:30616"/>
    </ligand>
</feature>
<feature type="binding site" evidence="1">
    <location>
        <begin position="122"/>
        <end position="128"/>
    </location>
    <ligand>
        <name>ATP</name>
        <dbReference type="ChEBI" id="CHEBI:30616"/>
    </ligand>
</feature>
<feature type="site" description="Transition state stabilizer" evidence="1">
    <location>
        <position position="17"/>
    </location>
</feature>
<reference key="1">
    <citation type="journal article" date="2002" name="J. Bacteriol.">
        <title>Whole-genome comparison of Mycobacterium tuberculosis clinical and laboratory strains.</title>
        <authorList>
            <person name="Fleischmann R.D."/>
            <person name="Alland D."/>
            <person name="Eisen J.A."/>
            <person name="Carpenter L."/>
            <person name="White O."/>
            <person name="Peterson J.D."/>
            <person name="DeBoy R.T."/>
            <person name="Dodson R.J."/>
            <person name="Gwinn M.L."/>
            <person name="Haft D.H."/>
            <person name="Hickey E.K."/>
            <person name="Kolonay J.F."/>
            <person name="Nelson W.C."/>
            <person name="Umayam L.A."/>
            <person name="Ermolaeva M.D."/>
            <person name="Salzberg S.L."/>
            <person name="Delcher A."/>
            <person name="Utterback T.R."/>
            <person name="Weidman J.F."/>
            <person name="Khouri H.M."/>
            <person name="Gill J."/>
            <person name="Mikula A."/>
            <person name="Bishai W."/>
            <person name="Jacobs W.R. Jr."/>
            <person name="Venter J.C."/>
            <person name="Fraser C.M."/>
        </authorList>
    </citation>
    <scope>NUCLEOTIDE SEQUENCE [LARGE SCALE GENOMIC DNA]</scope>
    <source>
        <strain>CDC 1551 / Oshkosh</strain>
    </source>
</reference>
<gene>
    <name evidence="1" type="primary">coaD</name>
    <name type="synonym">kdtB</name>
    <name type="ordered locus">MT3043</name>
</gene>
<keyword id="KW-0067">ATP-binding</keyword>
<keyword id="KW-0173">Coenzyme A biosynthesis</keyword>
<keyword id="KW-0963">Cytoplasm</keyword>
<keyword id="KW-0460">Magnesium</keyword>
<keyword id="KW-0547">Nucleotide-binding</keyword>
<keyword id="KW-0548">Nucleotidyltransferase</keyword>
<keyword id="KW-1185">Reference proteome</keyword>
<keyword id="KW-0808">Transferase</keyword>
<dbReference type="EC" id="2.7.7.3" evidence="1"/>
<dbReference type="EMBL" id="AE000516">
    <property type="protein sequence ID" value="AAK47369.1"/>
    <property type="molecule type" value="Genomic_DNA"/>
</dbReference>
<dbReference type="PIR" id="B70671">
    <property type="entry name" value="B70671"/>
</dbReference>
<dbReference type="RefSeq" id="WP_003414998.1">
    <property type="nucleotide sequence ID" value="NZ_KK341227.1"/>
</dbReference>
<dbReference type="SMR" id="P9WPA4"/>
<dbReference type="GeneID" id="45426954"/>
<dbReference type="KEGG" id="mtc:MT3043"/>
<dbReference type="PATRIC" id="fig|83331.31.peg.3283"/>
<dbReference type="HOGENOM" id="CLU_100149_1_0_11"/>
<dbReference type="UniPathway" id="UPA00241">
    <property type="reaction ID" value="UER00355"/>
</dbReference>
<dbReference type="Proteomes" id="UP000001020">
    <property type="component" value="Chromosome"/>
</dbReference>
<dbReference type="GO" id="GO:0005737">
    <property type="term" value="C:cytoplasm"/>
    <property type="evidence" value="ECO:0007669"/>
    <property type="project" value="UniProtKB-SubCell"/>
</dbReference>
<dbReference type="GO" id="GO:0005524">
    <property type="term" value="F:ATP binding"/>
    <property type="evidence" value="ECO:0007669"/>
    <property type="project" value="UniProtKB-KW"/>
</dbReference>
<dbReference type="GO" id="GO:0004595">
    <property type="term" value="F:pantetheine-phosphate adenylyltransferase activity"/>
    <property type="evidence" value="ECO:0007669"/>
    <property type="project" value="UniProtKB-UniRule"/>
</dbReference>
<dbReference type="GO" id="GO:0015937">
    <property type="term" value="P:coenzyme A biosynthetic process"/>
    <property type="evidence" value="ECO:0007669"/>
    <property type="project" value="UniProtKB-UniRule"/>
</dbReference>
<dbReference type="CDD" id="cd02163">
    <property type="entry name" value="PPAT"/>
    <property type="match status" value="1"/>
</dbReference>
<dbReference type="FunFam" id="3.40.50.620:FF:000012">
    <property type="entry name" value="Phosphopantetheine adenylyltransferase"/>
    <property type="match status" value="1"/>
</dbReference>
<dbReference type="Gene3D" id="3.40.50.620">
    <property type="entry name" value="HUPs"/>
    <property type="match status" value="1"/>
</dbReference>
<dbReference type="HAMAP" id="MF_00151">
    <property type="entry name" value="PPAT_bact"/>
    <property type="match status" value="1"/>
</dbReference>
<dbReference type="InterPro" id="IPR004821">
    <property type="entry name" value="Cyt_trans-like"/>
</dbReference>
<dbReference type="InterPro" id="IPR001980">
    <property type="entry name" value="PPAT"/>
</dbReference>
<dbReference type="InterPro" id="IPR014729">
    <property type="entry name" value="Rossmann-like_a/b/a_fold"/>
</dbReference>
<dbReference type="NCBIfam" id="TIGR01510">
    <property type="entry name" value="coaD_prev_kdtB"/>
    <property type="match status" value="1"/>
</dbReference>
<dbReference type="NCBIfam" id="TIGR00125">
    <property type="entry name" value="cyt_tran_rel"/>
    <property type="match status" value="1"/>
</dbReference>
<dbReference type="PANTHER" id="PTHR21342">
    <property type="entry name" value="PHOSPHOPANTETHEINE ADENYLYLTRANSFERASE"/>
    <property type="match status" value="1"/>
</dbReference>
<dbReference type="PANTHER" id="PTHR21342:SF1">
    <property type="entry name" value="PHOSPHOPANTETHEINE ADENYLYLTRANSFERASE"/>
    <property type="match status" value="1"/>
</dbReference>
<dbReference type="Pfam" id="PF01467">
    <property type="entry name" value="CTP_transf_like"/>
    <property type="match status" value="1"/>
</dbReference>
<dbReference type="PRINTS" id="PR01020">
    <property type="entry name" value="LPSBIOSNTHSS"/>
</dbReference>
<dbReference type="SUPFAM" id="SSF52374">
    <property type="entry name" value="Nucleotidylyl transferase"/>
    <property type="match status" value="1"/>
</dbReference>
<organism>
    <name type="scientific">Mycobacterium tuberculosis (strain CDC 1551 / Oshkosh)</name>
    <dbReference type="NCBI Taxonomy" id="83331"/>
    <lineage>
        <taxon>Bacteria</taxon>
        <taxon>Bacillati</taxon>
        <taxon>Actinomycetota</taxon>
        <taxon>Actinomycetes</taxon>
        <taxon>Mycobacteriales</taxon>
        <taxon>Mycobacteriaceae</taxon>
        <taxon>Mycobacterium</taxon>
        <taxon>Mycobacterium tuberculosis complex</taxon>
    </lineage>
</organism>
<accession>P9WPA4</accession>
<accession>L0TCR8</accession>
<accession>O08023</accession>
<accession>P0A530</accession>
<accession>Q50452</accession>
<sequence length="161" mass="17628">MTGAVCPGSFDPVTLGHVDIFERAAAQFDEVVVAILVNPAKTGMFDLDERIAMVKESTTHLPNLRVQVGHGLVVDFVRSCGMTAIVKGLRTGTDFEYELQMAQMNKHIAGVDTFFVATAPRYSFVSSSLAKEVAMLGGDVSELLPEPVNRRLRDRLNTERT</sequence>
<comment type="function">
    <text evidence="1">Reversibly transfers an adenylyl group from ATP to 4'-phosphopantetheine, yielding dephospho-CoA (dPCoA) and pyrophosphate.</text>
</comment>
<comment type="catalytic activity">
    <reaction evidence="1">
        <text>(R)-4'-phosphopantetheine + ATP + H(+) = 3'-dephospho-CoA + diphosphate</text>
        <dbReference type="Rhea" id="RHEA:19801"/>
        <dbReference type="ChEBI" id="CHEBI:15378"/>
        <dbReference type="ChEBI" id="CHEBI:30616"/>
        <dbReference type="ChEBI" id="CHEBI:33019"/>
        <dbReference type="ChEBI" id="CHEBI:57328"/>
        <dbReference type="ChEBI" id="CHEBI:61723"/>
        <dbReference type="EC" id="2.7.7.3"/>
    </reaction>
</comment>
<comment type="cofactor">
    <cofactor evidence="1">
        <name>Mg(2+)</name>
        <dbReference type="ChEBI" id="CHEBI:18420"/>
    </cofactor>
</comment>
<comment type="pathway">
    <text evidence="1">Cofactor biosynthesis; coenzyme A biosynthesis; CoA from (R)-pantothenate: step 4/5.</text>
</comment>
<comment type="subunit">
    <text evidence="1">Homohexamer.</text>
</comment>
<comment type="subcellular location">
    <subcellularLocation>
        <location evidence="1">Cytoplasm</location>
    </subcellularLocation>
</comment>
<comment type="similarity">
    <text evidence="1">Belongs to the bacterial CoaD family.</text>
</comment>
<protein>
    <recommendedName>
        <fullName evidence="1">Phosphopantetheine adenylyltransferase</fullName>
        <ecNumber evidence="1">2.7.7.3</ecNumber>
    </recommendedName>
    <alternativeName>
        <fullName evidence="1">Dephospho-CoA pyrophosphorylase</fullName>
    </alternativeName>
    <alternativeName>
        <fullName evidence="1">Pantetheine-phosphate adenylyltransferase</fullName>
        <shortName evidence="1">PPAT</shortName>
    </alternativeName>
</protein>
<proteinExistence type="inferred from homology"/>
<name>COAD_MYCTO</name>
<evidence type="ECO:0000255" key="1">
    <source>
        <dbReference type="HAMAP-Rule" id="MF_00151"/>
    </source>
</evidence>